<organism>
    <name type="scientific">Thermus thermophilus (strain ATCC 27634 / DSM 579 / HB8)</name>
    <dbReference type="NCBI Taxonomy" id="300852"/>
    <lineage>
        <taxon>Bacteria</taxon>
        <taxon>Thermotogati</taxon>
        <taxon>Deinococcota</taxon>
        <taxon>Deinococci</taxon>
        <taxon>Thermales</taxon>
        <taxon>Thermaceae</taxon>
        <taxon>Thermus</taxon>
    </lineage>
</organism>
<proteinExistence type="evidence at protein level"/>
<name>NQO8_THET8</name>
<protein>
    <recommendedName>
        <fullName>NADH-quinone oxidoreductase subunit 8</fullName>
        <ecNumber>7.1.1.-</ecNumber>
    </recommendedName>
    <alternativeName>
        <fullName>NADH dehydrogenase I subunit 8</fullName>
    </alternativeName>
    <alternativeName>
        <fullName>NDH-1 subunit 8</fullName>
    </alternativeName>
</protein>
<dbReference type="EC" id="7.1.1.-"/>
<dbReference type="EMBL" id="U52917">
    <property type="protein sequence ID" value="AAA97945.1"/>
    <property type="molecule type" value="Genomic_DNA"/>
</dbReference>
<dbReference type="EMBL" id="AP008226">
    <property type="protein sequence ID" value="BAD69914.1"/>
    <property type="molecule type" value="Genomic_DNA"/>
</dbReference>
<dbReference type="PIR" id="T11905">
    <property type="entry name" value="T11905"/>
</dbReference>
<dbReference type="RefSeq" id="YP_143357.1">
    <property type="nucleotide sequence ID" value="NC_006461.1"/>
</dbReference>
<dbReference type="PDB" id="4HE8">
    <property type="method" value="X-ray"/>
    <property type="resolution" value="3.30 A"/>
    <property type="chains" value="C/H=1-365"/>
</dbReference>
<dbReference type="PDB" id="4HEA">
    <property type="method" value="X-ray"/>
    <property type="resolution" value="3.30 A"/>
    <property type="chains" value="H/Q=1-365"/>
</dbReference>
<dbReference type="PDB" id="6I0D">
    <property type="method" value="X-ray"/>
    <property type="resolution" value="3.60 A"/>
    <property type="chains" value="H/Q=1-365"/>
</dbReference>
<dbReference type="PDB" id="6I1P">
    <property type="method" value="X-ray"/>
    <property type="resolution" value="3.21 A"/>
    <property type="chains" value="H/Q=1-365"/>
</dbReference>
<dbReference type="PDB" id="6Q8O">
    <property type="method" value="X-ray"/>
    <property type="resolution" value="3.60 A"/>
    <property type="chains" value="H/Q=1-365"/>
</dbReference>
<dbReference type="PDB" id="6Q8W">
    <property type="method" value="X-ray"/>
    <property type="resolution" value="3.40 A"/>
    <property type="chains" value="H/Q=1-365"/>
</dbReference>
<dbReference type="PDB" id="6Q8X">
    <property type="method" value="X-ray"/>
    <property type="resolution" value="3.51 A"/>
    <property type="chains" value="H/Q=1-365"/>
</dbReference>
<dbReference type="PDB" id="6Y11">
    <property type="method" value="X-ray"/>
    <property type="resolution" value="3.11 A"/>
    <property type="chains" value="H/Q=1-365"/>
</dbReference>
<dbReference type="PDB" id="6ZIY">
    <property type="method" value="EM"/>
    <property type="resolution" value="4.25 A"/>
    <property type="chains" value="H=1-365"/>
</dbReference>
<dbReference type="PDB" id="6ZJL">
    <property type="method" value="EM"/>
    <property type="resolution" value="4.30 A"/>
    <property type="chains" value="H=1-365"/>
</dbReference>
<dbReference type="PDB" id="6ZJN">
    <property type="method" value="EM"/>
    <property type="resolution" value="6.10 A"/>
    <property type="chains" value="H=1-365"/>
</dbReference>
<dbReference type="PDB" id="6ZJY">
    <property type="method" value="EM"/>
    <property type="resolution" value="5.50 A"/>
    <property type="chains" value="H=1-365"/>
</dbReference>
<dbReference type="PDBsum" id="4HE8"/>
<dbReference type="PDBsum" id="4HEA"/>
<dbReference type="PDBsum" id="6I0D"/>
<dbReference type="PDBsum" id="6I1P"/>
<dbReference type="PDBsum" id="6Q8O"/>
<dbReference type="PDBsum" id="6Q8W"/>
<dbReference type="PDBsum" id="6Q8X"/>
<dbReference type="PDBsum" id="6Y11"/>
<dbReference type="PDBsum" id="6ZIY"/>
<dbReference type="PDBsum" id="6ZJL"/>
<dbReference type="PDBsum" id="6ZJN"/>
<dbReference type="PDBsum" id="6ZJY"/>
<dbReference type="EMDB" id="EMD-11231"/>
<dbReference type="EMDB" id="EMD-11235"/>
<dbReference type="EMDB" id="EMD-11237"/>
<dbReference type="EMDB" id="EMD-11238"/>
<dbReference type="SMR" id="Q60019"/>
<dbReference type="DIP" id="DIP-59266N"/>
<dbReference type="IntAct" id="Q60019">
    <property type="interactions" value="1"/>
</dbReference>
<dbReference type="TCDB" id="3.D.1.3.1">
    <property type="family name" value="the h+ or na+-translocating nadh dehydrogenase (ndh) family"/>
</dbReference>
<dbReference type="EnsemblBacteria" id="BAD69914">
    <property type="protein sequence ID" value="BAD69914"/>
    <property type="gene ID" value="BAD69914"/>
</dbReference>
<dbReference type="GeneID" id="3169634"/>
<dbReference type="KEGG" id="ttj:TTHA0091"/>
<dbReference type="PATRIC" id="fig|300852.9.peg.89"/>
<dbReference type="eggNOG" id="COG1005">
    <property type="taxonomic scope" value="Bacteria"/>
</dbReference>
<dbReference type="HOGENOM" id="CLU_015134_0_0_0"/>
<dbReference type="PhylomeDB" id="Q60019"/>
<dbReference type="EvolutionaryTrace" id="Q60019"/>
<dbReference type="Proteomes" id="UP000000532">
    <property type="component" value="Chromosome"/>
</dbReference>
<dbReference type="GO" id="GO:0005886">
    <property type="term" value="C:plasma membrane"/>
    <property type="evidence" value="ECO:0007669"/>
    <property type="project" value="UniProtKB-SubCell"/>
</dbReference>
<dbReference type="GO" id="GO:0003954">
    <property type="term" value="F:NADH dehydrogenase activity"/>
    <property type="evidence" value="ECO:0007669"/>
    <property type="project" value="TreeGrafter"/>
</dbReference>
<dbReference type="GO" id="GO:0016655">
    <property type="term" value="F:oxidoreductase activity, acting on NAD(P)H, quinone or similar compound as acceptor"/>
    <property type="evidence" value="ECO:0007669"/>
    <property type="project" value="UniProtKB-UniRule"/>
</dbReference>
<dbReference type="GO" id="GO:0048038">
    <property type="term" value="F:quinone binding"/>
    <property type="evidence" value="ECO:0007669"/>
    <property type="project" value="UniProtKB-KW"/>
</dbReference>
<dbReference type="GO" id="GO:0009060">
    <property type="term" value="P:aerobic respiration"/>
    <property type="evidence" value="ECO:0007669"/>
    <property type="project" value="TreeGrafter"/>
</dbReference>
<dbReference type="HAMAP" id="MF_01350">
    <property type="entry name" value="NDH1_NuoH"/>
    <property type="match status" value="1"/>
</dbReference>
<dbReference type="InterPro" id="IPR001694">
    <property type="entry name" value="NADH_UbQ_OxRdtase_su1/FPO"/>
</dbReference>
<dbReference type="InterPro" id="IPR018086">
    <property type="entry name" value="NADH_UbQ_OxRdtase_su1_CS"/>
</dbReference>
<dbReference type="NCBIfam" id="NF004741">
    <property type="entry name" value="PRK06076.1-2"/>
    <property type="match status" value="1"/>
</dbReference>
<dbReference type="PANTHER" id="PTHR11432">
    <property type="entry name" value="NADH DEHYDROGENASE SUBUNIT 1"/>
    <property type="match status" value="1"/>
</dbReference>
<dbReference type="PANTHER" id="PTHR11432:SF3">
    <property type="entry name" value="NADH-UBIQUINONE OXIDOREDUCTASE CHAIN 1"/>
    <property type="match status" value="1"/>
</dbReference>
<dbReference type="Pfam" id="PF00146">
    <property type="entry name" value="NADHdh"/>
    <property type="match status" value="1"/>
</dbReference>
<dbReference type="PROSITE" id="PS00667">
    <property type="entry name" value="COMPLEX1_ND1_1"/>
    <property type="match status" value="1"/>
</dbReference>
<dbReference type="PROSITE" id="PS00668">
    <property type="entry name" value="COMPLEX1_ND1_2"/>
    <property type="match status" value="1"/>
</dbReference>
<keyword id="KW-0002">3D-structure</keyword>
<keyword id="KW-0997">Cell inner membrane</keyword>
<keyword id="KW-1003">Cell membrane</keyword>
<keyword id="KW-0472">Membrane</keyword>
<keyword id="KW-0520">NAD</keyword>
<keyword id="KW-0874">Quinone</keyword>
<keyword id="KW-1185">Reference proteome</keyword>
<keyword id="KW-1278">Translocase</keyword>
<keyword id="KW-0812">Transmembrane</keyword>
<keyword id="KW-1133">Transmembrane helix</keyword>
<accession>Q60019</accession>
<accession>Q5SM52</accession>
<gene>
    <name type="primary">nqo8</name>
    <name type="ordered locus">TTHA0091</name>
</gene>
<evidence type="ECO:0000255" key="1"/>
<evidence type="ECO:0000305" key="2"/>
<evidence type="ECO:0007829" key="3">
    <source>
        <dbReference type="PDB" id="4HEA"/>
    </source>
</evidence>
<evidence type="ECO:0007829" key="4">
    <source>
        <dbReference type="PDB" id="6I1P"/>
    </source>
</evidence>
<evidence type="ECO:0007829" key="5">
    <source>
        <dbReference type="PDB" id="6Y11"/>
    </source>
</evidence>
<comment type="function">
    <text>NDH-1 shuttles electrons from NADH, via FMN and iron-sulfur (Fe-S) centers, to quinones in the respiratory chain. The immediate electron acceptor for the enzyme in this species is menaquinone. Couples the redox reaction to proton translocation (for every two electrons transferred, four hydrogen ions are translocated across the cytoplasmic membrane), and thus conserves the redox energy in a proton gradient required for the synthesis of ATP.</text>
</comment>
<comment type="catalytic activity">
    <reaction>
        <text>a quinone + NADH + 5 H(+)(in) = a quinol + NAD(+) + 4 H(+)(out)</text>
        <dbReference type="Rhea" id="RHEA:57888"/>
        <dbReference type="ChEBI" id="CHEBI:15378"/>
        <dbReference type="ChEBI" id="CHEBI:24646"/>
        <dbReference type="ChEBI" id="CHEBI:57540"/>
        <dbReference type="ChEBI" id="CHEBI:57945"/>
        <dbReference type="ChEBI" id="CHEBI:132124"/>
    </reaction>
</comment>
<comment type="subunit">
    <text>NDH-1 is composed of 15 different subunits, Nqo1 to Nqo15. The complex has a L-shaped structure, with the hydrophobic arm (subunits Nqo7, Nqo8 and Nqo10 to Nqo14) embedded in the membrane and the hydrophilic peripheral arm (subunits Nqo1 to Nqo6, Nqo9 and Nqo15) protruding into the bacterial cytoplasm. The hydrophilic domain contains all the redox centers.</text>
</comment>
<comment type="subcellular location">
    <subcellularLocation>
        <location>Cell inner membrane</location>
        <topology>Multi-pass membrane protein</topology>
    </subcellularLocation>
</comment>
<comment type="similarity">
    <text evidence="2">Belongs to the complex I subunit 1 family.</text>
</comment>
<sequence>MTWSYPVDPYWMVALKALLVVVGLLTAFAFMTLIERRLLARFQVRMGPNRVGPFGLLQPLADAIKSIFKEDIVVAQADRFLFVLAPLISVVFALLAFGLIPFGPPGSFFGYQPWVINLDLGILYLFAVSELAVYGIFLSGWASGSKYSLLGSLRSSASLISYELGLGLALLAPVLLVGSLNLNDIVNWQKEHGWLFLYAFPAFLVYLIASMAEAARTPFDLPEAEQELVGGYHTEYSSIKWALFQMAEYIHFITASALIPTLFLGGWTMPVLEVPYLWMFLKIAFFLFFFIWIRATWFRLRYDQLLRFGWGFLFPLALLWFLVTALVVALDLPRTYLLYLSALSFLVLLGAVLYTPKPARKGGGA</sequence>
<reference key="1">
    <citation type="journal article" date="1997" name="J. Biol. Chem.">
        <title>The proton-translocating NADH-quinone oxidoreductase (NDH-1) of thermophilic bacterium Thermus thermophilus HB-8. Complete DNA sequence of the gene cluster and thermostable properties of the expressed NQO2 subunit.</title>
        <authorList>
            <person name="Yano T."/>
            <person name="Chu S.S."/>
            <person name="Sled' V.D."/>
            <person name="Ohnishi T."/>
            <person name="Yagi T."/>
        </authorList>
    </citation>
    <scope>NUCLEOTIDE SEQUENCE [GENOMIC DNA]</scope>
    <source>
        <strain>ATCC 27634 / DSM 579 / HB8</strain>
    </source>
</reference>
<reference key="2">
    <citation type="submission" date="2004-11" db="EMBL/GenBank/DDBJ databases">
        <title>Complete genome sequence of Thermus thermophilus HB8.</title>
        <authorList>
            <person name="Masui R."/>
            <person name="Kurokawa K."/>
            <person name="Nakagawa N."/>
            <person name="Tokunaga F."/>
            <person name="Koyama Y."/>
            <person name="Shibata T."/>
            <person name="Oshima T."/>
            <person name="Yokoyama S."/>
            <person name="Yasunaga T."/>
            <person name="Kuramitsu S."/>
        </authorList>
    </citation>
    <scope>NUCLEOTIDE SEQUENCE [LARGE SCALE GENOMIC DNA]</scope>
    <source>
        <strain>ATCC 27634 / DSM 579 / HB8</strain>
    </source>
</reference>
<feature type="chain" id="PRO_0000117522" description="NADH-quinone oxidoreductase subunit 8">
    <location>
        <begin position="1"/>
        <end position="365"/>
    </location>
</feature>
<feature type="transmembrane region" description="Helical" evidence="1">
    <location>
        <begin position="11"/>
        <end position="31"/>
    </location>
</feature>
<feature type="transmembrane region" description="Helical" evidence="1">
    <location>
        <begin position="80"/>
        <end position="100"/>
    </location>
</feature>
<feature type="transmembrane region" description="Helical" evidence="1">
    <location>
        <begin position="120"/>
        <end position="140"/>
    </location>
</feature>
<feature type="transmembrane region" description="Helical" evidence="1">
    <location>
        <begin position="157"/>
        <end position="177"/>
    </location>
</feature>
<feature type="transmembrane region" description="Helical" evidence="1">
    <location>
        <begin position="192"/>
        <end position="212"/>
    </location>
</feature>
<feature type="transmembrane region" description="Helical" evidence="1">
    <location>
        <begin position="252"/>
        <end position="272"/>
    </location>
</feature>
<feature type="transmembrane region" description="Helical" evidence="1">
    <location>
        <begin position="273"/>
        <end position="293"/>
    </location>
</feature>
<feature type="transmembrane region" description="Helical" evidence="1">
    <location>
        <begin position="310"/>
        <end position="330"/>
    </location>
</feature>
<feature type="transmembrane region" description="Helical" evidence="1">
    <location>
        <begin position="336"/>
        <end position="356"/>
    </location>
</feature>
<feature type="helix" evidence="5">
    <location>
        <begin position="10"/>
        <end position="42"/>
    </location>
</feature>
<feature type="strand" evidence="4">
    <location>
        <begin position="43"/>
        <end position="45"/>
    </location>
</feature>
<feature type="strand" evidence="5">
    <location>
        <begin position="50"/>
        <end position="55"/>
    </location>
</feature>
<feature type="helix" evidence="5">
    <location>
        <begin position="58"/>
        <end position="66"/>
    </location>
</feature>
<feature type="helix" evidence="5">
    <location>
        <begin position="79"/>
        <end position="94"/>
    </location>
</feature>
<feature type="strand" evidence="5">
    <location>
        <begin position="95"/>
        <end position="97"/>
    </location>
</feature>
<feature type="strand" evidence="4">
    <location>
        <begin position="98"/>
        <end position="100"/>
    </location>
</feature>
<feature type="turn" evidence="5">
    <location>
        <begin position="105"/>
        <end position="109"/>
    </location>
</feature>
<feature type="strand" evidence="5">
    <location>
        <begin position="113"/>
        <end position="115"/>
    </location>
</feature>
<feature type="helix" evidence="5">
    <location>
        <begin position="121"/>
        <end position="142"/>
    </location>
</feature>
<feature type="helix" evidence="5">
    <location>
        <begin position="146"/>
        <end position="177"/>
    </location>
</feature>
<feature type="helix" evidence="5">
    <location>
        <begin position="182"/>
        <end position="191"/>
    </location>
</feature>
<feature type="helix" evidence="5">
    <location>
        <begin position="196"/>
        <end position="212"/>
    </location>
</feature>
<feature type="turn" evidence="5">
    <location>
        <begin position="213"/>
        <end position="215"/>
    </location>
</feature>
<feature type="strand" evidence="5">
    <location>
        <begin position="216"/>
        <end position="218"/>
    </location>
</feature>
<feature type="turn" evidence="5">
    <location>
        <begin position="220"/>
        <end position="222"/>
    </location>
</feature>
<feature type="strand" evidence="3">
    <location>
        <begin position="231"/>
        <end position="235"/>
    </location>
</feature>
<feature type="helix" evidence="5">
    <location>
        <begin position="240"/>
        <end position="262"/>
    </location>
</feature>
<feature type="turn" evidence="5">
    <location>
        <begin position="263"/>
        <end position="265"/>
    </location>
</feature>
<feature type="strand" evidence="5">
    <location>
        <begin position="270"/>
        <end position="272"/>
    </location>
</feature>
<feature type="helix" evidence="5">
    <location>
        <begin position="277"/>
        <end position="296"/>
    </location>
</feature>
<feature type="helix" evidence="5">
    <location>
        <begin position="303"/>
        <end position="311"/>
    </location>
</feature>
<feature type="helix" evidence="5">
    <location>
        <begin position="313"/>
        <end position="330"/>
    </location>
</feature>
<feature type="helix" evidence="5">
    <location>
        <begin position="335"/>
        <end position="350"/>
    </location>
</feature>